<reference key="1">
    <citation type="journal article" date="2000" name="Science">
        <title>Complete genome sequence of Neisseria meningitidis serogroup B strain MC58.</title>
        <authorList>
            <person name="Tettelin H."/>
            <person name="Saunders N.J."/>
            <person name="Heidelberg J.F."/>
            <person name="Jeffries A.C."/>
            <person name="Nelson K.E."/>
            <person name="Eisen J.A."/>
            <person name="Ketchum K.A."/>
            <person name="Hood D.W."/>
            <person name="Peden J.F."/>
            <person name="Dodson R.J."/>
            <person name="Nelson W.C."/>
            <person name="Gwinn M.L."/>
            <person name="DeBoy R.T."/>
            <person name="Peterson J.D."/>
            <person name="Hickey E.K."/>
            <person name="Haft D.H."/>
            <person name="Salzberg S.L."/>
            <person name="White O."/>
            <person name="Fleischmann R.D."/>
            <person name="Dougherty B.A."/>
            <person name="Mason T.M."/>
            <person name="Ciecko A."/>
            <person name="Parksey D.S."/>
            <person name="Blair E."/>
            <person name="Cittone H."/>
            <person name="Clark E.B."/>
            <person name="Cotton M.D."/>
            <person name="Utterback T.R."/>
            <person name="Khouri H.M."/>
            <person name="Qin H."/>
            <person name="Vamathevan J.J."/>
            <person name="Gill J."/>
            <person name="Scarlato V."/>
            <person name="Masignani V."/>
            <person name="Pizza M."/>
            <person name="Grandi G."/>
            <person name="Sun L."/>
            <person name="Smith H.O."/>
            <person name="Fraser C.M."/>
            <person name="Moxon E.R."/>
            <person name="Rappuoli R."/>
            <person name="Venter J.C."/>
        </authorList>
    </citation>
    <scope>NUCLEOTIDE SEQUENCE [LARGE SCALE GENOMIC DNA]</scope>
    <source>
        <strain>ATCC BAA-335 / MC58</strain>
    </source>
</reference>
<protein>
    <recommendedName>
        <fullName evidence="1">Transcription elongation factor GreA</fullName>
    </recommendedName>
    <alternativeName>
        <fullName evidence="1">Transcript cleavage factor GreA</fullName>
    </alternativeName>
</protein>
<proteinExistence type="inferred from homology"/>
<evidence type="ECO:0000255" key="1">
    <source>
        <dbReference type="HAMAP-Rule" id="MF_00105"/>
    </source>
</evidence>
<accession>Q9JYU3</accession>
<comment type="function">
    <text evidence="1">Necessary for efficient RNA polymerase transcription elongation past template-encoded arresting sites. The arresting sites in DNA have the property of trapping a certain fraction of elongating RNA polymerases that pass through, resulting in locked ternary complexes. Cleavage of the nascent transcript by cleavage factors such as GreA or GreB allows the resumption of elongation from the new 3'terminus. GreA releases sequences of 2 to 3 nucleotides.</text>
</comment>
<comment type="similarity">
    <text evidence="1">Belongs to the GreA/GreB family.</text>
</comment>
<sequence length="158" mass="17515">MQKIPLTVRGAELLKQELQQLKSVARPEVIEAIAEARSHGDLSENAEYEAAKERQGFIEGRISELEHKLSVAHIINPTEIHAEGKIVFGTTVTLEDLETEEHVIYQIVGEDEADIKQGKIYVGSPIARALIGKEEGDTAEVQAPGGVREYDIIEVRYI</sequence>
<gene>
    <name evidence="1" type="primary">greA</name>
    <name type="ordered locus">NMB1430</name>
</gene>
<feature type="chain" id="PRO_0000176947" description="Transcription elongation factor GreA">
    <location>
        <begin position="1"/>
        <end position="158"/>
    </location>
</feature>
<feature type="coiled-coil region" evidence="1">
    <location>
        <begin position="46"/>
        <end position="66"/>
    </location>
</feature>
<keyword id="KW-0175">Coiled coil</keyword>
<keyword id="KW-0238">DNA-binding</keyword>
<keyword id="KW-1185">Reference proteome</keyword>
<keyword id="KW-0804">Transcription</keyword>
<keyword id="KW-0805">Transcription regulation</keyword>
<organism>
    <name type="scientific">Neisseria meningitidis serogroup B (strain ATCC BAA-335 / MC58)</name>
    <dbReference type="NCBI Taxonomy" id="122586"/>
    <lineage>
        <taxon>Bacteria</taxon>
        <taxon>Pseudomonadati</taxon>
        <taxon>Pseudomonadota</taxon>
        <taxon>Betaproteobacteria</taxon>
        <taxon>Neisseriales</taxon>
        <taxon>Neisseriaceae</taxon>
        <taxon>Neisseria</taxon>
    </lineage>
</organism>
<name>GREA_NEIMB</name>
<dbReference type="EMBL" id="AE002098">
    <property type="protein sequence ID" value="AAF41791.1"/>
    <property type="molecule type" value="Genomic_DNA"/>
</dbReference>
<dbReference type="PIR" id="G81084">
    <property type="entry name" value="G81084"/>
</dbReference>
<dbReference type="RefSeq" id="NP_274442.1">
    <property type="nucleotide sequence ID" value="NC_003112.2"/>
</dbReference>
<dbReference type="RefSeq" id="WP_002225115.1">
    <property type="nucleotide sequence ID" value="NC_003112.2"/>
</dbReference>
<dbReference type="SMR" id="Q9JYU3"/>
<dbReference type="FunCoup" id="Q9JYU3">
    <property type="interactions" value="458"/>
</dbReference>
<dbReference type="STRING" id="122586.NMB1430"/>
<dbReference type="PaxDb" id="122586-NMB1430"/>
<dbReference type="KEGG" id="nme:NMB1430"/>
<dbReference type="PATRIC" id="fig|122586.8.peg.1798"/>
<dbReference type="HOGENOM" id="CLU_101379_2_0_4"/>
<dbReference type="InParanoid" id="Q9JYU3"/>
<dbReference type="OrthoDB" id="9808774at2"/>
<dbReference type="Proteomes" id="UP000000425">
    <property type="component" value="Chromosome"/>
</dbReference>
<dbReference type="GO" id="GO:0003677">
    <property type="term" value="F:DNA binding"/>
    <property type="evidence" value="ECO:0007669"/>
    <property type="project" value="UniProtKB-UniRule"/>
</dbReference>
<dbReference type="GO" id="GO:0070063">
    <property type="term" value="F:RNA polymerase binding"/>
    <property type="evidence" value="ECO:0007669"/>
    <property type="project" value="InterPro"/>
</dbReference>
<dbReference type="GO" id="GO:0006354">
    <property type="term" value="P:DNA-templated transcription elongation"/>
    <property type="evidence" value="ECO:0000318"/>
    <property type="project" value="GO_Central"/>
</dbReference>
<dbReference type="GO" id="GO:0032784">
    <property type="term" value="P:regulation of DNA-templated transcription elongation"/>
    <property type="evidence" value="ECO:0007669"/>
    <property type="project" value="UniProtKB-UniRule"/>
</dbReference>
<dbReference type="FunFam" id="1.10.287.180:FF:000001">
    <property type="entry name" value="Transcription elongation factor GreA"/>
    <property type="match status" value="1"/>
</dbReference>
<dbReference type="FunFam" id="3.10.50.30:FF:000001">
    <property type="entry name" value="Transcription elongation factor GreA"/>
    <property type="match status" value="1"/>
</dbReference>
<dbReference type="Gene3D" id="3.10.50.30">
    <property type="entry name" value="Transcription elongation factor, GreA/GreB, C-terminal domain"/>
    <property type="match status" value="1"/>
</dbReference>
<dbReference type="Gene3D" id="1.10.287.180">
    <property type="entry name" value="Transcription elongation factor, GreA/GreB, N-terminal domain"/>
    <property type="match status" value="1"/>
</dbReference>
<dbReference type="HAMAP" id="MF_00105">
    <property type="entry name" value="GreA_GreB"/>
    <property type="match status" value="1"/>
</dbReference>
<dbReference type="InterPro" id="IPR036953">
    <property type="entry name" value="GreA/GreB_C_sf"/>
</dbReference>
<dbReference type="InterPro" id="IPR018151">
    <property type="entry name" value="TF_GreA/GreB_CS"/>
</dbReference>
<dbReference type="InterPro" id="IPR006359">
    <property type="entry name" value="Tscrpt_elong_fac_GreA"/>
</dbReference>
<dbReference type="InterPro" id="IPR028624">
    <property type="entry name" value="Tscrpt_elong_fac_GreA/B"/>
</dbReference>
<dbReference type="InterPro" id="IPR001437">
    <property type="entry name" value="Tscrpt_elong_fac_GreA/B_C"/>
</dbReference>
<dbReference type="InterPro" id="IPR023459">
    <property type="entry name" value="Tscrpt_elong_fac_GreA/B_fam"/>
</dbReference>
<dbReference type="InterPro" id="IPR022691">
    <property type="entry name" value="Tscrpt_elong_fac_GreA/B_N"/>
</dbReference>
<dbReference type="InterPro" id="IPR036805">
    <property type="entry name" value="Tscrpt_elong_fac_GreA/B_N_sf"/>
</dbReference>
<dbReference type="NCBIfam" id="TIGR01462">
    <property type="entry name" value="greA"/>
    <property type="match status" value="1"/>
</dbReference>
<dbReference type="NCBIfam" id="NF001261">
    <property type="entry name" value="PRK00226.1-2"/>
    <property type="match status" value="1"/>
</dbReference>
<dbReference type="NCBIfam" id="NF001263">
    <property type="entry name" value="PRK00226.1-4"/>
    <property type="match status" value="1"/>
</dbReference>
<dbReference type="NCBIfam" id="NF001264">
    <property type="entry name" value="PRK00226.1-5"/>
    <property type="match status" value="1"/>
</dbReference>
<dbReference type="PANTHER" id="PTHR30437">
    <property type="entry name" value="TRANSCRIPTION ELONGATION FACTOR GREA"/>
    <property type="match status" value="1"/>
</dbReference>
<dbReference type="PANTHER" id="PTHR30437:SF4">
    <property type="entry name" value="TRANSCRIPTION ELONGATION FACTOR GREA"/>
    <property type="match status" value="1"/>
</dbReference>
<dbReference type="Pfam" id="PF01272">
    <property type="entry name" value="GreA_GreB"/>
    <property type="match status" value="1"/>
</dbReference>
<dbReference type="Pfam" id="PF03449">
    <property type="entry name" value="GreA_GreB_N"/>
    <property type="match status" value="1"/>
</dbReference>
<dbReference type="PIRSF" id="PIRSF006092">
    <property type="entry name" value="GreA_GreB"/>
    <property type="match status" value="1"/>
</dbReference>
<dbReference type="SUPFAM" id="SSF54534">
    <property type="entry name" value="FKBP-like"/>
    <property type="match status" value="1"/>
</dbReference>
<dbReference type="SUPFAM" id="SSF46557">
    <property type="entry name" value="GreA transcript cleavage protein, N-terminal domain"/>
    <property type="match status" value="1"/>
</dbReference>
<dbReference type="PROSITE" id="PS00829">
    <property type="entry name" value="GREAB_1"/>
    <property type="match status" value="1"/>
</dbReference>